<organism>
    <name type="scientific">Proteus mirabilis (strain HI4320)</name>
    <dbReference type="NCBI Taxonomy" id="529507"/>
    <lineage>
        <taxon>Bacteria</taxon>
        <taxon>Pseudomonadati</taxon>
        <taxon>Pseudomonadota</taxon>
        <taxon>Gammaproteobacteria</taxon>
        <taxon>Enterobacterales</taxon>
        <taxon>Morganellaceae</taxon>
        <taxon>Proteus</taxon>
    </lineage>
</organism>
<protein>
    <recommendedName>
        <fullName evidence="1">Threonine--tRNA ligase</fullName>
        <ecNumber evidence="1">6.1.1.3</ecNumber>
    </recommendedName>
    <alternativeName>
        <fullName evidence="1">Threonyl-tRNA synthetase</fullName>
        <shortName evidence="1">ThrRS</shortName>
    </alternativeName>
</protein>
<name>SYT_PROMH</name>
<accession>B4ETK6</accession>
<dbReference type="EC" id="6.1.1.3" evidence="1"/>
<dbReference type="EMBL" id="AM942759">
    <property type="protein sequence ID" value="CAR42252.1"/>
    <property type="molecule type" value="Genomic_DNA"/>
</dbReference>
<dbReference type="RefSeq" id="WP_004242605.1">
    <property type="nucleotide sequence ID" value="NC_010554.1"/>
</dbReference>
<dbReference type="SMR" id="B4ETK6"/>
<dbReference type="EnsemblBacteria" id="CAR42252">
    <property type="protein sequence ID" value="CAR42252"/>
    <property type="gene ID" value="PMI1034"/>
</dbReference>
<dbReference type="GeneID" id="6800467"/>
<dbReference type="KEGG" id="pmr:PMI1034"/>
<dbReference type="eggNOG" id="COG0441">
    <property type="taxonomic scope" value="Bacteria"/>
</dbReference>
<dbReference type="HOGENOM" id="CLU_008554_0_1_6"/>
<dbReference type="Proteomes" id="UP000008319">
    <property type="component" value="Chromosome"/>
</dbReference>
<dbReference type="GO" id="GO:0005829">
    <property type="term" value="C:cytosol"/>
    <property type="evidence" value="ECO:0007669"/>
    <property type="project" value="TreeGrafter"/>
</dbReference>
<dbReference type="GO" id="GO:0005524">
    <property type="term" value="F:ATP binding"/>
    <property type="evidence" value="ECO:0007669"/>
    <property type="project" value="UniProtKB-UniRule"/>
</dbReference>
<dbReference type="GO" id="GO:0046872">
    <property type="term" value="F:metal ion binding"/>
    <property type="evidence" value="ECO:0007669"/>
    <property type="project" value="UniProtKB-KW"/>
</dbReference>
<dbReference type="GO" id="GO:0004829">
    <property type="term" value="F:threonine-tRNA ligase activity"/>
    <property type="evidence" value="ECO:0007669"/>
    <property type="project" value="UniProtKB-UniRule"/>
</dbReference>
<dbReference type="GO" id="GO:0000049">
    <property type="term" value="F:tRNA binding"/>
    <property type="evidence" value="ECO:0007669"/>
    <property type="project" value="UniProtKB-KW"/>
</dbReference>
<dbReference type="GO" id="GO:0006435">
    <property type="term" value="P:threonyl-tRNA aminoacylation"/>
    <property type="evidence" value="ECO:0007669"/>
    <property type="project" value="UniProtKB-UniRule"/>
</dbReference>
<dbReference type="CDD" id="cd01667">
    <property type="entry name" value="TGS_ThrRS"/>
    <property type="match status" value="1"/>
</dbReference>
<dbReference type="CDD" id="cd00860">
    <property type="entry name" value="ThrRS_anticodon"/>
    <property type="match status" value="1"/>
</dbReference>
<dbReference type="CDD" id="cd00771">
    <property type="entry name" value="ThrRS_core"/>
    <property type="match status" value="1"/>
</dbReference>
<dbReference type="FunFam" id="3.10.20.30:FF:000005">
    <property type="entry name" value="Threonine--tRNA ligase"/>
    <property type="match status" value="1"/>
</dbReference>
<dbReference type="FunFam" id="3.30.54.20:FF:000002">
    <property type="entry name" value="Threonine--tRNA ligase"/>
    <property type="match status" value="1"/>
</dbReference>
<dbReference type="FunFam" id="3.30.930.10:FF:000002">
    <property type="entry name" value="Threonine--tRNA ligase"/>
    <property type="match status" value="1"/>
</dbReference>
<dbReference type="FunFam" id="3.40.50.800:FF:000001">
    <property type="entry name" value="Threonine--tRNA ligase"/>
    <property type="match status" value="1"/>
</dbReference>
<dbReference type="FunFam" id="3.30.980.10:FF:000005">
    <property type="entry name" value="Threonyl-tRNA synthetase, mitochondrial"/>
    <property type="match status" value="1"/>
</dbReference>
<dbReference type="Gene3D" id="3.10.20.30">
    <property type="match status" value="1"/>
</dbReference>
<dbReference type="Gene3D" id="3.30.54.20">
    <property type="match status" value="1"/>
</dbReference>
<dbReference type="Gene3D" id="3.40.50.800">
    <property type="entry name" value="Anticodon-binding domain"/>
    <property type="match status" value="1"/>
</dbReference>
<dbReference type="Gene3D" id="3.30.930.10">
    <property type="entry name" value="Bira Bifunctional Protein, Domain 2"/>
    <property type="match status" value="1"/>
</dbReference>
<dbReference type="Gene3D" id="3.30.980.10">
    <property type="entry name" value="Threonyl-trna Synthetase, Chain A, domain 2"/>
    <property type="match status" value="1"/>
</dbReference>
<dbReference type="HAMAP" id="MF_00184">
    <property type="entry name" value="Thr_tRNA_synth"/>
    <property type="match status" value="1"/>
</dbReference>
<dbReference type="InterPro" id="IPR002314">
    <property type="entry name" value="aa-tRNA-synt_IIb"/>
</dbReference>
<dbReference type="InterPro" id="IPR006195">
    <property type="entry name" value="aa-tRNA-synth_II"/>
</dbReference>
<dbReference type="InterPro" id="IPR045864">
    <property type="entry name" value="aa-tRNA-synth_II/BPL/LPL"/>
</dbReference>
<dbReference type="InterPro" id="IPR004154">
    <property type="entry name" value="Anticodon-bd"/>
</dbReference>
<dbReference type="InterPro" id="IPR036621">
    <property type="entry name" value="Anticodon-bd_dom_sf"/>
</dbReference>
<dbReference type="InterPro" id="IPR012675">
    <property type="entry name" value="Beta-grasp_dom_sf"/>
</dbReference>
<dbReference type="InterPro" id="IPR004095">
    <property type="entry name" value="TGS"/>
</dbReference>
<dbReference type="InterPro" id="IPR012676">
    <property type="entry name" value="TGS-like"/>
</dbReference>
<dbReference type="InterPro" id="IPR002320">
    <property type="entry name" value="Thr-tRNA-ligase_IIa"/>
</dbReference>
<dbReference type="InterPro" id="IPR018163">
    <property type="entry name" value="Thr/Ala-tRNA-synth_IIc_edit"/>
</dbReference>
<dbReference type="InterPro" id="IPR047246">
    <property type="entry name" value="ThrRS_anticodon"/>
</dbReference>
<dbReference type="InterPro" id="IPR033728">
    <property type="entry name" value="ThrRS_core"/>
</dbReference>
<dbReference type="InterPro" id="IPR012947">
    <property type="entry name" value="tRNA_SAD"/>
</dbReference>
<dbReference type="NCBIfam" id="TIGR00418">
    <property type="entry name" value="thrS"/>
    <property type="match status" value="1"/>
</dbReference>
<dbReference type="PANTHER" id="PTHR11451:SF44">
    <property type="entry name" value="THREONINE--TRNA LIGASE, CHLOROPLASTIC_MITOCHONDRIAL 2"/>
    <property type="match status" value="1"/>
</dbReference>
<dbReference type="PANTHER" id="PTHR11451">
    <property type="entry name" value="THREONINE-TRNA LIGASE"/>
    <property type="match status" value="1"/>
</dbReference>
<dbReference type="Pfam" id="PF03129">
    <property type="entry name" value="HGTP_anticodon"/>
    <property type="match status" value="1"/>
</dbReference>
<dbReference type="Pfam" id="PF02824">
    <property type="entry name" value="TGS"/>
    <property type="match status" value="1"/>
</dbReference>
<dbReference type="Pfam" id="PF00587">
    <property type="entry name" value="tRNA-synt_2b"/>
    <property type="match status" value="1"/>
</dbReference>
<dbReference type="Pfam" id="PF07973">
    <property type="entry name" value="tRNA_SAD"/>
    <property type="match status" value="1"/>
</dbReference>
<dbReference type="PRINTS" id="PR01047">
    <property type="entry name" value="TRNASYNTHTHR"/>
</dbReference>
<dbReference type="SMART" id="SM00863">
    <property type="entry name" value="tRNA_SAD"/>
    <property type="match status" value="1"/>
</dbReference>
<dbReference type="SUPFAM" id="SSF52954">
    <property type="entry name" value="Class II aaRS ABD-related"/>
    <property type="match status" value="1"/>
</dbReference>
<dbReference type="SUPFAM" id="SSF55681">
    <property type="entry name" value="Class II aaRS and biotin synthetases"/>
    <property type="match status" value="1"/>
</dbReference>
<dbReference type="SUPFAM" id="SSF81271">
    <property type="entry name" value="TGS-like"/>
    <property type="match status" value="1"/>
</dbReference>
<dbReference type="SUPFAM" id="SSF55186">
    <property type="entry name" value="ThrRS/AlaRS common domain"/>
    <property type="match status" value="1"/>
</dbReference>
<dbReference type="PROSITE" id="PS50862">
    <property type="entry name" value="AA_TRNA_LIGASE_II"/>
    <property type="match status" value="1"/>
</dbReference>
<dbReference type="PROSITE" id="PS51880">
    <property type="entry name" value="TGS"/>
    <property type="match status" value="1"/>
</dbReference>
<sequence>MPIITLPDGSQRQFENAVSVMDVAADIGPGLAKACIAGRVNGELVDACELIEQDSQLAIITAKDDEGLEIIRHSCAHLLGHAIKQLWPQTKMAIGPVIENGFYYDVDLDHSLTQEDLETLEKRMLELAKTDYDVIKKRVTWAQARETFVARGEDYKVAILDENISQDAHPALYHHQEYIDMCRGPHVPNMRFCHHFKLQKIAGAYWRGNSDNKMLQRIYGTAWADKKQLKAYLERLEEAAKRDHRKIGKQLDLYHMQEEAPGMAFWHNDGWTIFRELETFVRCKLKEYDYQEVKGPFMMDRVLWEKTGHWENYKENMFTTSSENREYCIKPMNCPGHVQIFKQGLRSYRDLPLRMAEFGSCHRNEPSGALHGLMRVRGFTQDDAHIFCTEEQILSEVNNCIKLIYDVYSTFGFEKIVVKLSTRPEKRIGEDALWDIAETDLAKALTDNNIEFEYQPGEGAFYGPKIEFTLYDCLDRAWQCGTVQLDFSLPGRLGASYVAENNERKVPVMLHRAVLGSLERFIGILTEEYAGFFPTWLAPQQVVVMNITDGQADYVQKLVKELQDAGIRAKADLRNEKIGFKIREHTLRRVPYMLVCGDKEVESGKVAVRTRRGKDLGSIDVNDFKEKLLQEIRSRSLHQLEE</sequence>
<feature type="chain" id="PRO_1000098598" description="Threonine--tRNA ligase">
    <location>
        <begin position="1"/>
        <end position="642"/>
    </location>
</feature>
<feature type="domain" description="TGS" evidence="2">
    <location>
        <begin position="1"/>
        <end position="61"/>
    </location>
</feature>
<feature type="region of interest" description="Catalytic" evidence="1">
    <location>
        <begin position="243"/>
        <end position="534"/>
    </location>
</feature>
<feature type="binding site" evidence="1">
    <location>
        <position position="334"/>
    </location>
    <ligand>
        <name>Zn(2+)</name>
        <dbReference type="ChEBI" id="CHEBI:29105"/>
    </ligand>
</feature>
<feature type="binding site" evidence="1">
    <location>
        <position position="385"/>
    </location>
    <ligand>
        <name>Zn(2+)</name>
        <dbReference type="ChEBI" id="CHEBI:29105"/>
    </ligand>
</feature>
<feature type="binding site" evidence="1">
    <location>
        <position position="511"/>
    </location>
    <ligand>
        <name>Zn(2+)</name>
        <dbReference type="ChEBI" id="CHEBI:29105"/>
    </ligand>
</feature>
<comment type="function">
    <text evidence="1">Catalyzes the attachment of threonine to tRNA(Thr) in a two-step reaction: L-threonine is first activated by ATP to form Thr-AMP and then transferred to the acceptor end of tRNA(Thr). Also edits incorrectly charged L-seryl-tRNA(Thr).</text>
</comment>
<comment type="catalytic activity">
    <reaction evidence="1">
        <text>tRNA(Thr) + L-threonine + ATP = L-threonyl-tRNA(Thr) + AMP + diphosphate + H(+)</text>
        <dbReference type="Rhea" id="RHEA:24624"/>
        <dbReference type="Rhea" id="RHEA-COMP:9670"/>
        <dbReference type="Rhea" id="RHEA-COMP:9704"/>
        <dbReference type="ChEBI" id="CHEBI:15378"/>
        <dbReference type="ChEBI" id="CHEBI:30616"/>
        <dbReference type="ChEBI" id="CHEBI:33019"/>
        <dbReference type="ChEBI" id="CHEBI:57926"/>
        <dbReference type="ChEBI" id="CHEBI:78442"/>
        <dbReference type="ChEBI" id="CHEBI:78534"/>
        <dbReference type="ChEBI" id="CHEBI:456215"/>
        <dbReference type="EC" id="6.1.1.3"/>
    </reaction>
</comment>
<comment type="cofactor">
    <cofactor evidence="1">
        <name>Zn(2+)</name>
        <dbReference type="ChEBI" id="CHEBI:29105"/>
    </cofactor>
    <text evidence="1">Binds 1 zinc ion per subunit.</text>
</comment>
<comment type="subunit">
    <text evidence="1">Homodimer.</text>
</comment>
<comment type="subcellular location">
    <subcellularLocation>
        <location evidence="1">Cytoplasm</location>
    </subcellularLocation>
</comment>
<comment type="similarity">
    <text evidence="1">Belongs to the class-II aminoacyl-tRNA synthetase family.</text>
</comment>
<keyword id="KW-0030">Aminoacyl-tRNA synthetase</keyword>
<keyword id="KW-0067">ATP-binding</keyword>
<keyword id="KW-0963">Cytoplasm</keyword>
<keyword id="KW-0436">Ligase</keyword>
<keyword id="KW-0479">Metal-binding</keyword>
<keyword id="KW-0547">Nucleotide-binding</keyword>
<keyword id="KW-0648">Protein biosynthesis</keyword>
<keyword id="KW-1185">Reference proteome</keyword>
<keyword id="KW-0694">RNA-binding</keyword>
<keyword id="KW-0820">tRNA-binding</keyword>
<keyword id="KW-0862">Zinc</keyword>
<reference key="1">
    <citation type="journal article" date="2008" name="J. Bacteriol.">
        <title>Complete genome sequence of uropathogenic Proteus mirabilis, a master of both adherence and motility.</title>
        <authorList>
            <person name="Pearson M.M."/>
            <person name="Sebaihia M."/>
            <person name="Churcher C."/>
            <person name="Quail M.A."/>
            <person name="Seshasayee A.S."/>
            <person name="Luscombe N.M."/>
            <person name="Abdellah Z."/>
            <person name="Arrosmith C."/>
            <person name="Atkin B."/>
            <person name="Chillingworth T."/>
            <person name="Hauser H."/>
            <person name="Jagels K."/>
            <person name="Moule S."/>
            <person name="Mungall K."/>
            <person name="Norbertczak H."/>
            <person name="Rabbinowitsch E."/>
            <person name="Walker D."/>
            <person name="Whithead S."/>
            <person name="Thomson N.R."/>
            <person name="Rather P.N."/>
            <person name="Parkhill J."/>
            <person name="Mobley H.L.T."/>
        </authorList>
    </citation>
    <scope>NUCLEOTIDE SEQUENCE [LARGE SCALE GENOMIC DNA]</scope>
    <source>
        <strain>HI4320</strain>
    </source>
</reference>
<proteinExistence type="inferred from homology"/>
<gene>
    <name evidence="1" type="primary">thrS</name>
    <name type="ordered locus">PMI1034</name>
</gene>
<evidence type="ECO:0000255" key="1">
    <source>
        <dbReference type="HAMAP-Rule" id="MF_00184"/>
    </source>
</evidence>
<evidence type="ECO:0000255" key="2">
    <source>
        <dbReference type="PROSITE-ProRule" id="PRU01228"/>
    </source>
</evidence>